<protein>
    <recommendedName>
        <fullName>UPF0758 protein Spy49_0870</fullName>
    </recommendedName>
</protein>
<accession>B5XLG6</accession>
<sequence length="226" mass="25743">MYSIKCDDNKAMPRERLMRLGAESLSNQELLAILLRTGNKEKHVLELSSYLLSHLDSLADFKKMSLQELQHLAGIGKVKAIEIKAMIELVSRILATDKTLTDSVLTSVQVAEKMMAALGDKKQEHLVVLYLDNQNRIIEEKTIFIGTVRRSLAEPREILYYACKNMATSLIVIHNHPSGNIEPSSNDYCFTEKIKRSCEDLGIICLDHIIVSYKDYYSFREKSTLF</sequence>
<proteinExistence type="inferred from homology"/>
<keyword id="KW-0378">Hydrolase</keyword>
<keyword id="KW-0479">Metal-binding</keyword>
<keyword id="KW-0482">Metalloprotease</keyword>
<keyword id="KW-0645">Protease</keyword>
<keyword id="KW-0862">Zinc</keyword>
<dbReference type="EMBL" id="CP000829">
    <property type="protein sequence ID" value="ACI61178.1"/>
    <property type="molecule type" value="Genomic_DNA"/>
</dbReference>
<dbReference type="SMR" id="B5XLG6"/>
<dbReference type="KEGG" id="soz:Spy49_0870"/>
<dbReference type="HOGENOM" id="CLU_073529_0_2_9"/>
<dbReference type="Proteomes" id="UP000001039">
    <property type="component" value="Chromosome"/>
</dbReference>
<dbReference type="GO" id="GO:0046872">
    <property type="term" value="F:metal ion binding"/>
    <property type="evidence" value="ECO:0007669"/>
    <property type="project" value="UniProtKB-KW"/>
</dbReference>
<dbReference type="GO" id="GO:0008237">
    <property type="term" value="F:metallopeptidase activity"/>
    <property type="evidence" value="ECO:0007669"/>
    <property type="project" value="UniProtKB-KW"/>
</dbReference>
<dbReference type="GO" id="GO:0006508">
    <property type="term" value="P:proteolysis"/>
    <property type="evidence" value="ECO:0007669"/>
    <property type="project" value="UniProtKB-KW"/>
</dbReference>
<dbReference type="CDD" id="cd08071">
    <property type="entry name" value="MPN_DUF2466"/>
    <property type="match status" value="1"/>
</dbReference>
<dbReference type="Gene3D" id="3.40.140.10">
    <property type="entry name" value="Cytidine Deaminase, domain 2"/>
    <property type="match status" value="1"/>
</dbReference>
<dbReference type="InterPro" id="IPR037518">
    <property type="entry name" value="MPN"/>
</dbReference>
<dbReference type="InterPro" id="IPR025657">
    <property type="entry name" value="RadC_JAB"/>
</dbReference>
<dbReference type="InterPro" id="IPR010994">
    <property type="entry name" value="RuvA_2-like"/>
</dbReference>
<dbReference type="InterPro" id="IPR001405">
    <property type="entry name" value="UPF0758"/>
</dbReference>
<dbReference type="InterPro" id="IPR020891">
    <property type="entry name" value="UPF0758_CS"/>
</dbReference>
<dbReference type="InterPro" id="IPR046778">
    <property type="entry name" value="UPF0758_N"/>
</dbReference>
<dbReference type="NCBIfam" id="NF000642">
    <property type="entry name" value="PRK00024.1"/>
    <property type="match status" value="1"/>
</dbReference>
<dbReference type="NCBIfam" id="TIGR00608">
    <property type="entry name" value="radc"/>
    <property type="match status" value="1"/>
</dbReference>
<dbReference type="PANTHER" id="PTHR30471">
    <property type="entry name" value="DNA REPAIR PROTEIN RADC"/>
    <property type="match status" value="1"/>
</dbReference>
<dbReference type="PANTHER" id="PTHR30471:SF3">
    <property type="entry name" value="UPF0758 PROTEIN YEES-RELATED"/>
    <property type="match status" value="1"/>
</dbReference>
<dbReference type="Pfam" id="PF04002">
    <property type="entry name" value="RadC"/>
    <property type="match status" value="1"/>
</dbReference>
<dbReference type="Pfam" id="PF20582">
    <property type="entry name" value="UPF0758_N"/>
    <property type="match status" value="1"/>
</dbReference>
<dbReference type="SUPFAM" id="SSF47781">
    <property type="entry name" value="RuvA domain 2-like"/>
    <property type="match status" value="1"/>
</dbReference>
<dbReference type="PROSITE" id="PS50249">
    <property type="entry name" value="MPN"/>
    <property type="match status" value="1"/>
</dbReference>
<dbReference type="PROSITE" id="PS01302">
    <property type="entry name" value="UPF0758"/>
    <property type="match status" value="1"/>
</dbReference>
<evidence type="ECO:0000255" key="1">
    <source>
        <dbReference type="PROSITE-ProRule" id="PRU01182"/>
    </source>
</evidence>
<evidence type="ECO:0000305" key="2"/>
<name>Y870_STRPZ</name>
<organism>
    <name type="scientific">Streptococcus pyogenes serotype M49 (strain NZ131)</name>
    <dbReference type="NCBI Taxonomy" id="471876"/>
    <lineage>
        <taxon>Bacteria</taxon>
        <taxon>Bacillati</taxon>
        <taxon>Bacillota</taxon>
        <taxon>Bacilli</taxon>
        <taxon>Lactobacillales</taxon>
        <taxon>Streptococcaceae</taxon>
        <taxon>Streptococcus</taxon>
    </lineage>
</organism>
<comment type="similarity">
    <text evidence="2">Belongs to the UPF0758 family.</text>
</comment>
<gene>
    <name type="ordered locus">Spy49_0870</name>
</gene>
<feature type="chain" id="PRO_1000089865" description="UPF0758 protein Spy49_0870">
    <location>
        <begin position="1"/>
        <end position="226"/>
    </location>
</feature>
<feature type="domain" description="MPN" evidence="1">
    <location>
        <begin position="103"/>
        <end position="225"/>
    </location>
</feature>
<feature type="short sequence motif" description="JAMM motif" evidence="1">
    <location>
        <begin position="174"/>
        <end position="187"/>
    </location>
</feature>
<feature type="binding site" evidence="1">
    <location>
        <position position="174"/>
    </location>
    <ligand>
        <name>Zn(2+)</name>
        <dbReference type="ChEBI" id="CHEBI:29105"/>
        <note>catalytic</note>
    </ligand>
</feature>
<feature type="binding site" evidence="1">
    <location>
        <position position="176"/>
    </location>
    <ligand>
        <name>Zn(2+)</name>
        <dbReference type="ChEBI" id="CHEBI:29105"/>
        <note>catalytic</note>
    </ligand>
</feature>
<feature type="binding site" evidence="1">
    <location>
        <position position="187"/>
    </location>
    <ligand>
        <name>Zn(2+)</name>
        <dbReference type="ChEBI" id="CHEBI:29105"/>
        <note>catalytic</note>
    </ligand>
</feature>
<reference key="1">
    <citation type="journal article" date="2008" name="J. Bacteriol.">
        <title>Genome sequence of a nephritogenic and highly transformable M49 strain of Streptococcus pyogenes.</title>
        <authorList>
            <person name="McShan W.M."/>
            <person name="Ferretti J.J."/>
            <person name="Karasawa T."/>
            <person name="Suvorov A.N."/>
            <person name="Lin S."/>
            <person name="Qin B."/>
            <person name="Jia H."/>
            <person name="Kenton S."/>
            <person name="Najar F."/>
            <person name="Wu H."/>
            <person name="Scott J."/>
            <person name="Roe B.A."/>
            <person name="Savic D.J."/>
        </authorList>
    </citation>
    <scope>NUCLEOTIDE SEQUENCE [LARGE SCALE GENOMIC DNA]</scope>
    <source>
        <strain>NZ131</strain>
    </source>
</reference>